<accession>A5PJM5</accession>
<organism>
    <name type="scientific">Bos taurus</name>
    <name type="common">Bovine</name>
    <dbReference type="NCBI Taxonomy" id="9913"/>
    <lineage>
        <taxon>Eukaryota</taxon>
        <taxon>Metazoa</taxon>
        <taxon>Chordata</taxon>
        <taxon>Craniata</taxon>
        <taxon>Vertebrata</taxon>
        <taxon>Euteleostomi</taxon>
        <taxon>Mammalia</taxon>
        <taxon>Eutheria</taxon>
        <taxon>Laurasiatheria</taxon>
        <taxon>Artiodactyla</taxon>
        <taxon>Ruminantia</taxon>
        <taxon>Pecora</taxon>
        <taxon>Bovidae</taxon>
        <taxon>Bovinae</taxon>
        <taxon>Bos</taxon>
    </lineage>
</organism>
<reference key="1">
    <citation type="submission" date="2007-06" db="EMBL/GenBank/DDBJ databases">
        <authorList>
            <consortium name="NIH - Mammalian Gene Collection (MGC) project"/>
        </authorList>
    </citation>
    <scope>NUCLEOTIDE SEQUENCE [LARGE SCALE MRNA]</scope>
    <source>
        <strain>Hereford</strain>
        <tissue>Ascending colon</tissue>
    </source>
</reference>
<feature type="chain" id="PRO_0000328426" description="Mini-chromosome maintenance complex-binding protein">
    <location>
        <begin position="1"/>
        <end position="642"/>
    </location>
</feature>
<feature type="region of interest" description="Disordered" evidence="3">
    <location>
        <begin position="151"/>
        <end position="188"/>
    </location>
</feature>
<feature type="compositionally biased region" description="Polar residues" evidence="3">
    <location>
        <begin position="151"/>
        <end position="161"/>
    </location>
</feature>
<feature type="modified residue" description="Phosphoserine" evidence="2">
    <location>
        <position position="154"/>
    </location>
</feature>
<feature type="modified residue" description="Phosphothreonine" evidence="2">
    <location>
        <position position="160"/>
    </location>
</feature>
<feature type="modified residue" description="Phosphoserine" evidence="2">
    <location>
        <position position="167"/>
    </location>
</feature>
<feature type="modified residue" description="Phosphoserine" evidence="2">
    <location>
        <position position="298"/>
    </location>
</feature>
<gene>
    <name type="primary">MCMBP</name>
</gene>
<keyword id="KW-0131">Cell cycle</keyword>
<keyword id="KW-0132">Cell division</keyword>
<keyword id="KW-0235">DNA replication</keyword>
<keyword id="KW-0498">Mitosis</keyword>
<keyword id="KW-0539">Nucleus</keyword>
<keyword id="KW-0597">Phosphoprotein</keyword>
<keyword id="KW-1185">Reference proteome</keyword>
<sequence length="642" mass="73096">MPCGEDWLSHPLGIVQGFFAQNGVNPDWEKKVIEYFKEKLKENNAPKWVPSLNEVPLHYLKPNSFVKFRCMVQDMFDPEFYMGVYETVNRNTKARVLHFGKYRDVAECGPQQEVDLNSPRTTTLERQTFYCVPVPGESMWVKEAYVNANQARVSPSTSYTPSRHKRSYEDDEDMDLQPNKQKDQHMGARQAGNVGGLQWCGEPKRLETEASSGQQLSSLNLSSPFDLNFPLPGEKGPACLVKVYEDWDCFKVNDVLELYGILSVDPVLSILNNDERDASSLLDPMECTDMAEEQRVHSPPASLVPRIHVVLAQKLQHINPLLPACLNKEESKTCKFVSGFMSELSPVRAELLGFLTHALLGDSLAAEYLILHLISTVYTRRDVLPLGKFTVNLSGCPRNSTFTEHLYRIIQHLVPASFRLQMTIENMNHLKFIPHKDYTANRLVSGLLQLPSNTSLVIDETLLEQGQLDTPGVHNVTALSNLITWQKVDYDFSYHQMEFPCNINVFITSEGRSLLPADCQIHLQPQLMPPNMEEYMNSLLSAVLPSVLNKFRIYLTLLRFLDYSISDEITKAVEDDFVEMRKNDPQSITADDLHQLLIVARFLSLSAGQTTLSRERWLRAKQLESLRRARLQQQKCVNGNEL</sequence>
<dbReference type="EMBL" id="BC142172">
    <property type="protein sequence ID" value="AAI42173.1"/>
    <property type="molecule type" value="mRNA"/>
</dbReference>
<dbReference type="RefSeq" id="NP_001092444.1">
    <property type="nucleotide sequence ID" value="NM_001098974.1"/>
</dbReference>
<dbReference type="FunCoup" id="A5PJM5">
    <property type="interactions" value="4082"/>
</dbReference>
<dbReference type="STRING" id="9913.ENSBTAP00000013028"/>
<dbReference type="PaxDb" id="9913-ENSBTAP00000013028"/>
<dbReference type="GeneID" id="514863"/>
<dbReference type="KEGG" id="bta:514863"/>
<dbReference type="CTD" id="79892"/>
<dbReference type="VEuPathDB" id="HostDB:ENSBTAG00000009877"/>
<dbReference type="eggNOG" id="KOG2545">
    <property type="taxonomic scope" value="Eukaryota"/>
</dbReference>
<dbReference type="HOGENOM" id="CLU_029811_0_0_1"/>
<dbReference type="InParanoid" id="A5PJM5"/>
<dbReference type="OMA" id="EEHTEMI"/>
<dbReference type="OrthoDB" id="329666at2759"/>
<dbReference type="TreeFam" id="TF324793"/>
<dbReference type="Proteomes" id="UP000009136">
    <property type="component" value="Chromosome 26"/>
</dbReference>
<dbReference type="Bgee" id="ENSBTAG00000009877">
    <property type="expression patterns" value="Expressed in neutrophil and 107 other cell types or tissues"/>
</dbReference>
<dbReference type="GO" id="GO:0005634">
    <property type="term" value="C:nucleus"/>
    <property type="evidence" value="ECO:0000250"/>
    <property type="project" value="UniProtKB"/>
</dbReference>
<dbReference type="GO" id="GO:0003682">
    <property type="term" value="F:chromatin binding"/>
    <property type="evidence" value="ECO:0000250"/>
    <property type="project" value="UniProtKB"/>
</dbReference>
<dbReference type="GO" id="GO:0051301">
    <property type="term" value="P:cell division"/>
    <property type="evidence" value="ECO:0007669"/>
    <property type="project" value="UniProtKB-KW"/>
</dbReference>
<dbReference type="GO" id="GO:0006261">
    <property type="term" value="P:DNA-templated DNA replication"/>
    <property type="evidence" value="ECO:0000250"/>
    <property type="project" value="UniProtKB"/>
</dbReference>
<dbReference type="GO" id="GO:0007062">
    <property type="term" value="P:sister chromatid cohesion"/>
    <property type="evidence" value="ECO:0000250"/>
    <property type="project" value="UniProtKB"/>
</dbReference>
<dbReference type="InterPro" id="IPR019140">
    <property type="entry name" value="MCM_complex-bd"/>
</dbReference>
<dbReference type="PANTHER" id="PTHR13489">
    <property type="entry name" value="MINI-CHROMOSOME MAINTENANCE COMPLEX-BINDING PROTEIN"/>
    <property type="match status" value="1"/>
</dbReference>
<dbReference type="PANTHER" id="PTHR13489:SF0">
    <property type="entry name" value="MINI-CHROMOSOME MAINTENANCE COMPLEX-BINDING PROTEIN"/>
    <property type="match status" value="1"/>
</dbReference>
<dbReference type="Pfam" id="PF09739">
    <property type="entry name" value="MCM_bind"/>
    <property type="match status" value="1"/>
</dbReference>
<name>MCMBP_BOVIN</name>
<evidence type="ECO:0000250" key="1"/>
<evidence type="ECO:0000250" key="2">
    <source>
        <dbReference type="UniProtKB" id="Q9BTE3"/>
    </source>
</evidence>
<evidence type="ECO:0000256" key="3">
    <source>
        <dbReference type="SAM" id="MobiDB-lite"/>
    </source>
</evidence>
<evidence type="ECO:0000305" key="4"/>
<proteinExistence type="evidence at transcript level"/>
<comment type="function">
    <text evidence="1">Associated component of the MCM complex that acts as a regulator of DNA replication. Binds to the MCM complex during late S phase and promotes the disassembly of the MCM complex from chromatin, thereby acting as a key regulator of pre-replication complex (pre-RC) unloading from replicated DNA. Can dissociate the MCM complex without addition of ATP; probably acts by destabilizing interactions of each individual subunits of the MCM complex. Required for sister chromatid cohesion (By similarity).</text>
</comment>
<comment type="subunit">
    <text evidence="1">Interacts with the MCM complex: associates with the MCM3-7 complex which lacks MCM2, while it does not interact with the MCM complex when MCM2 is present (MCM2-7 complex). Interacts with the RPA complex, when composed of all RPA1, RPA2 and RPA3 components, but not with RPA1 or RPA2 alone (By similarity).</text>
</comment>
<comment type="subcellular location">
    <subcellularLocation>
        <location evidence="1">Nucleus</location>
    </subcellularLocation>
    <text evidence="1">Associates with chromatin. Highly associated with chromatin in G1/S and S phases, reduced binding to chromatin in G2, and further decreased binding in early M phase. It then reassociates with chromatin in late M phase. Dissociates from chromatin later than component of the MCM complex (By similarity).</text>
</comment>
<comment type="similarity">
    <text evidence="4">Belongs to the MCMBP family.</text>
</comment>
<protein>
    <recommendedName>
        <fullName>Mini-chromosome maintenance complex-binding protein</fullName>
        <shortName>MCM-BP</shortName>
        <shortName>MCM-binding protein</shortName>
    </recommendedName>
</protein>